<name>TEKL1_BOVIN</name>
<gene>
    <name evidence="4" type="primary">TEKTL1</name>
    <name type="synonym">CCDC105</name>
</gene>
<proteinExistence type="evidence at protein level"/>
<reference key="1">
    <citation type="submission" date="2005-11" db="EMBL/GenBank/DDBJ databases">
        <authorList>
            <consortium name="NIH - Mammalian Gene Collection (MGC) project"/>
        </authorList>
    </citation>
    <scope>NUCLEOTIDE SEQUENCE [LARGE SCALE MRNA]</scope>
    <source>
        <strain>Crossbred X Angus</strain>
        <tissue>Liver</tissue>
    </source>
</reference>
<reference evidence="5" key="2">
    <citation type="journal article" date="2023" name="Cell">
        <title>Structural specializations of the sperm tail.</title>
        <authorList>
            <person name="Leung M.R."/>
            <person name="Zeng J."/>
            <person name="Wang X."/>
            <person name="Roelofs M.C."/>
            <person name="Huang W."/>
            <person name="Zenezini Chiozzi R."/>
            <person name="Hevler J.F."/>
            <person name="Heck A.J.R."/>
            <person name="Dutcher S.K."/>
            <person name="Brown A."/>
            <person name="Zhang R."/>
            <person name="Zeev-Ben-Mordehai T."/>
        </authorList>
    </citation>
    <scope>STRUCTURE BY ELECTRON MICROSCOPY (3.60 ANGSTROMS)</scope>
    <scope>FUNCTION</scope>
    <scope>SUBUNIT</scope>
    <scope>SUBCELLULAR LOCATION</scope>
</reference>
<keyword id="KW-0002">3D-structure</keyword>
<keyword id="KW-0966">Cell projection</keyword>
<keyword id="KW-0969">Cilium</keyword>
<keyword id="KW-0175">Coiled coil</keyword>
<keyword id="KW-0963">Cytoplasm</keyword>
<keyword id="KW-0206">Cytoskeleton</keyword>
<keyword id="KW-0282">Flagellum</keyword>
<keyword id="KW-0597">Phosphoprotein</keyword>
<keyword id="KW-1185">Reference proteome</keyword>
<dbReference type="EMBL" id="BC110142">
    <property type="protein sequence ID" value="AAI10143.1"/>
    <property type="molecule type" value="mRNA"/>
</dbReference>
<dbReference type="RefSeq" id="NP_001039757.1">
    <property type="nucleotide sequence ID" value="NM_001046292.2"/>
</dbReference>
<dbReference type="PDB" id="8OTZ">
    <property type="method" value="EM"/>
    <property type="resolution" value="3.60 A"/>
    <property type="chains" value="BO/BP/BQ/BR=1-500"/>
</dbReference>
<dbReference type="PDBsum" id="8OTZ"/>
<dbReference type="EMDB" id="EMD-17187"/>
<dbReference type="EMDB" id="EMD-50664"/>
<dbReference type="SMR" id="Q2YDN4"/>
<dbReference type="FunCoup" id="Q2YDN4">
    <property type="interactions" value="114"/>
</dbReference>
<dbReference type="STRING" id="9913.ENSBTAP00000027472"/>
<dbReference type="PaxDb" id="9913-ENSBTAP00000027472"/>
<dbReference type="Ensembl" id="ENSBTAT00000027472.4">
    <property type="protein sequence ID" value="ENSBTAP00000027472.3"/>
    <property type="gene ID" value="ENSBTAG00000020615.4"/>
</dbReference>
<dbReference type="GeneID" id="528661"/>
<dbReference type="KEGG" id="bta:528661"/>
<dbReference type="CTD" id="610464"/>
<dbReference type="VEuPathDB" id="HostDB:ENSBTAG00000020615"/>
<dbReference type="VGNC" id="VGNC:26830">
    <property type="gene designation" value="CCDC105"/>
</dbReference>
<dbReference type="eggNOG" id="ENOG502RUEW">
    <property type="taxonomic scope" value="Eukaryota"/>
</dbReference>
<dbReference type="GeneTree" id="ENSGT00390000003207"/>
<dbReference type="HOGENOM" id="CLU_052125_0_0_1"/>
<dbReference type="InParanoid" id="Q2YDN4"/>
<dbReference type="OMA" id="YTPECAT"/>
<dbReference type="OrthoDB" id="9896158at2759"/>
<dbReference type="TreeFam" id="TF329813"/>
<dbReference type="Proteomes" id="UP000009136">
    <property type="component" value="Chromosome 7"/>
</dbReference>
<dbReference type="Bgee" id="ENSBTAG00000020615">
    <property type="expression patterns" value="Expressed in spermatid and 8 other cell types or tissues"/>
</dbReference>
<dbReference type="GO" id="GO:0160112">
    <property type="term" value="C:axonemal B tubule inner sheath"/>
    <property type="evidence" value="ECO:0000250"/>
    <property type="project" value="UniProtKB"/>
</dbReference>
<dbReference type="GO" id="GO:0036126">
    <property type="term" value="C:sperm flagellum"/>
    <property type="evidence" value="ECO:0000250"/>
    <property type="project" value="UniProtKB"/>
</dbReference>
<dbReference type="GO" id="GO:0030317">
    <property type="term" value="P:flagellated sperm motility"/>
    <property type="evidence" value="ECO:0000250"/>
    <property type="project" value="UniProtKB"/>
</dbReference>
<dbReference type="InterPro" id="IPR048256">
    <property type="entry name" value="Tektin-like"/>
</dbReference>
<dbReference type="InterPro" id="IPR038949">
    <property type="entry name" value="TEKTL1"/>
</dbReference>
<dbReference type="PANTHER" id="PTHR35081">
    <property type="entry name" value="COILED-COIL DOMAIN-CONTAINING PROTEIN 105"/>
    <property type="match status" value="1"/>
</dbReference>
<dbReference type="PANTHER" id="PTHR35081:SF1">
    <property type="entry name" value="COILED-COIL DOMAIN-CONTAINING PROTEIN 105"/>
    <property type="match status" value="1"/>
</dbReference>
<dbReference type="Pfam" id="PF03148">
    <property type="entry name" value="Tektin"/>
    <property type="match status" value="1"/>
</dbReference>
<feature type="chain" id="PRO_0000279390" description="Tektin-like protein 1">
    <location>
        <begin position="1"/>
        <end position="500"/>
    </location>
</feature>
<feature type="coiled-coil region" evidence="2">
    <location>
        <begin position="198"/>
        <end position="229"/>
    </location>
</feature>
<feature type="coiled-coil region" evidence="2">
    <location>
        <begin position="420"/>
        <end position="444"/>
    </location>
</feature>
<feature type="modified residue" description="Phosphotyrosine" evidence="1">
    <location>
        <position position="372"/>
    </location>
</feature>
<protein>
    <recommendedName>
        <fullName evidence="4">Tektin-like protein 1</fullName>
    </recommendedName>
    <alternativeName>
        <fullName>Coiled-coil domain-containing protein 105</fullName>
    </alternativeName>
</protein>
<organism>
    <name type="scientific">Bos taurus</name>
    <name type="common">Bovine</name>
    <dbReference type="NCBI Taxonomy" id="9913"/>
    <lineage>
        <taxon>Eukaryota</taxon>
        <taxon>Metazoa</taxon>
        <taxon>Chordata</taxon>
        <taxon>Craniata</taxon>
        <taxon>Vertebrata</taxon>
        <taxon>Euteleostomi</taxon>
        <taxon>Mammalia</taxon>
        <taxon>Eutheria</taxon>
        <taxon>Laurasiatheria</taxon>
        <taxon>Artiodactyla</taxon>
        <taxon>Ruminantia</taxon>
        <taxon>Pecora</taxon>
        <taxon>Bovidae</taxon>
        <taxon>Bovinae</taxon>
        <taxon>Bos</taxon>
    </lineage>
</organism>
<sequence>MPVLIPPVEHSQDTRVGHPAWREATRALAEEAHQLTDRCGQEAVTMWQPNESVRDPHVAHHLCRAAYILPWRFRVEMLKGGSTMEKPPPGEGVTLWKSKMKPPAWHARLPLPMHRDARALQTAEVVQAHARGARLTAARLGRAQHQINGQLRLLQRQREATDRRLSEVRKALLINQQSVKLRGYRPKSETISDKADSMLTWEKEELKSMKRKMEADMEKSEALLKTLASCRDALVFCCKERLQAVELMNQPLDKVLEQAGRHSWVNISRVPTPRTQGLKTPPPDPVGTYTPECAKALYEAKRLLMESKDTLLDMAKNEEDIREQQQQISDRVCASLAQKMRETLELKDRLNMTLGLMRGTIHRCTKFNQEMYITRGLIKGPLSKSHLETREKLDRPLVRMYQRHVGTQLPEAARLAQGTDKLQRHISHVEKNLDELLSMRKKLTWSFNCKKIGHNVDYSVVRLRLRQRHPQVCYEQAQRLVNDWDPRTPPRVKSNTAITK</sequence>
<comment type="function">
    <text evidence="3">Microtubule inner protein (MIP) part of the dynein-decorated doublet microtubules (DMTs) in sperm flagellar axoneme, which is required for motile flagellum beating (PubMed:37327785). Forms an extensive interaction network cross-linking the lumen of axonemal doublet microtubules (PubMed:37327785).</text>
</comment>
<comment type="subunit">
    <text evidence="3">Microtubule inner protein component of sperm flagellar doublet microtubules.</text>
</comment>
<comment type="subcellular location">
    <subcellularLocation>
        <location evidence="3">Cytoplasm</location>
        <location evidence="3">Cytoskeleton</location>
        <location evidence="3">Flagellum axoneme</location>
    </subcellularLocation>
</comment>
<evidence type="ECO:0000250" key="1">
    <source>
        <dbReference type="UniProtKB" id="Q9D4K7"/>
    </source>
</evidence>
<evidence type="ECO:0000255" key="2"/>
<evidence type="ECO:0000269" key="3">
    <source>
    </source>
</evidence>
<evidence type="ECO:0000303" key="4">
    <source>
    </source>
</evidence>
<evidence type="ECO:0007744" key="5">
    <source>
        <dbReference type="PDB" id="8OTZ"/>
    </source>
</evidence>
<accession>Q2YDN4</accession>